<reference key="1">
    <citation type="journal article" date="1999" name="Nature">
        <title>Sequence and analysis of chromosome 4 of the plant Arabidopsis thaliana.</title>
        <authorList>
            <person name="Mayer K.F.X."/>
            <person name="Schueller C."/>
            <person name="Wambutt R."/>
            <person name="Murphy G."/>
            <person name="Volckaert G."/>
            <person name="Pohl T."/>
            <person name="Duesterhoeft A."/>
            <person name="Stiekema W."/>
            <person name="Entian K.-D."/>
            <person name="Terryn N."/>
            <person name="Harris B."/>
            <person name="Ansorge W."/>
            <person name="Brandt P."/>
            <person name="Grivell L.A."/>
            <person name="Rieger M."/>
            <person name="Weichselgartner M."/>
            <person name="de Simone V."/>
            <person name="Obermaier B."/>
            <person name="Mache R."/>
            <person name="Mueller M."/>
            <person name="Kreis M."/>
            <person name="Delseny M."/>
            <person name="Puigdomenech P."/>
            <person name="Watson M."/>
            <person name="Schmidtheini T."/>
            <person name="Reichert B."/>
            <person name="Portetelle D."/>
            <person name="Perez-Alonso M."/>
            <person name="Boutry M."/>
            <person name="Bancroft I."/>
            <person name="Vos P."/>
            <person name="Hoheisel J."/>
            <person name="Zimmermann W."/>
            <person name="Wedler H."/>
            <person name="Ridley P."/>
            <person name="Langham S.-A."/>
            <person name="McCullagh B."/>
            <person name="Bilham L."/>
            <person name="Robben J."/>
            <person name="van der Schueren J."/>
            <person name="Grymonprez B."/>
            <person name="Chuang Y.-J."/>
            <person name="Vandenbussche F."/>
            <person name="Braeken M."/>
            <person name="Weltjens I."/>
            <person name="Voet M."/>
            <person name="Bastiaens I."/>
            <person name="Aert R."/>
            <person name="Defoor E."/>
            <person name="Weitzenegger T."/>
            <person name="Bothe G."/>
            <person name="Ramsperger U."/>
            <person name="Hilbert H."/>
            <person name="Braun M."/>
            <person name="Holzer E."/>
            <person name="Brandt A."/>
            <person name="Peters S."/>
            <person name="van Staveren M."/>
            <person name="Dirkse W."/>
            <person name="Mooijman P."/>
            <person name="Klein Lankhorst R."/>
            <person name="Rose M."/>
            <person name="Hauf J."/>
            <person name="Koetter P."/>
            <person name="Berneiser S."/>
            <person name="Hempel S."/>
            <person name="Feldpausch M."/>
            <person name="Lamberth S."/>
            <person name="Van den Daele H."/>
            <person name="De Keyser A."/>
            <person name="Buysshaert C."/>
            <person name="Gielen J."/>
            <person name="Villarroel R."/>
            <person name="De Clercq R."/>
            <person name="van Montagu M."/>
            <person name="Rogers J."/>
            <person name="Cronin A."/>
            <person name="Quail M.A."/>
            <person name="Bray-Allen S."/>
            <person name="Clark L."/>
            <person name="Doggett J."/>
            <person name="Hall S."/>
            <person name="Kay M."/>
            <person name="Lennard N."/>
            <person name="McLay K."/>
            <person name="Mayes R."/>
            <person name="Pettett A."/>
            <person name="Rajandream M.A."/>
            <person name="Lyne M."/>
            <person name="Benes V."/>
            <person name="Rechmann S."/>
            <person name="Borkova D."/>
            <person name="Bloecker H."/>
            <person name="Scharfe M."/>
            <person name="Grimm M."/>
            <person name="Loehnert T.-H."/>
            <person name="Dose S."/>
            <person name="de Haan M."/>
            <person name="Maarse A.C."/>
            <person name="Schaefer M."/>
            <person name="Mueller-Auer S."/>
            <person name="Gabel C."/>
            <person name="Fuchs M."/>
            <person name="Fartmann B."/>
            <person name="Granderath K."/>
            <person name="Dauner D."/>
            <person name="Herzl A."/>
            <person name="Neumann S."/>
            <person name="Argiriou A."/>
            <person name="Vitale D."/>
            <person name="Liguori R."/>
            <person name="Piravandi E."/>
            <person name="Massenet O."/>
            <person name="Quigley F."/>
            <person name="Clabauld G."/>
            <person name="Muendlein A."/>
            <person name="Felber R."/>
            <person name="Schnabl S."/>
            <person name="Hiller R."/>
            <person name="Schmidt W."/>
            <person name="Lecharny A."/>
            <person name="Aubourg S."/>
            <person name="Chefdor F."/>
            <person name="Cooke R."/>
            <person name="Berger C."/>
            <person name="Monfort A."/>
            <person name="Casacuberta E."/>
            <person name="Gibbons T."/>
            <person name="Weber N."/>
            <person name="Vandenbol M."/>
            <person name="Bargues M."/>
            <person name="Terol J."/>
            <person name="Torres A."/>
            <person name="Perez-Perez A."/>
            <person name="Purnelle B."/>
            <person name="Bent E."/>
            <person name="Johnson S."/>
            <person name="Tacon D."/>
            <person name="Jesse T."/>
            <person name="Heijnen L."/>
            <person name="Schwarz S."/>
            <person name="Scholler P."/>
            <person name="Heber S."/>
            <person name="Francs P."/>
            <person name="Bielke C."/>
            <person name="Frishman D."/>
            <person name="Haase D."/>
            <person name="Lemcke K."/>
            <person name="Mewes H.-W."/>
            <person name="Stocker S."/>
            <person name="Zaccaria P."/>
            <person name="Bevan M."/>
            <person name="Wilson R.K."/>
            <person name="de la Bastide M."/>
            <person name="Habermann K."/>
            <person name="Parnell L."/>
            <person name="Dedhia N."/>
            <person name="Gnoj L."/>
            <person name="Schutz K."/>
            <person name="Huang E."/>
            <person name="Spiegel L."/>
            <person name="Sekhon M."/>
            <person name="Murray J."/>
            <person name="Sheet P."/>
            <person name="Cordes M."/>
            <person name="Abu-Threideh J."/>
            <person name="Stoneking T."/>
            <person name="Kalicki J."/>
            <person name="Graves T."/>
            <person name="Harmon G."/>
            <person name="Edwards J."/>
            <person name="Latreille P."/>
            <person name="Courtney L."/>
            <person name="Cloud J."/>
            <person name="Abbott A."/>
            <person name="Scott K."/>
            <person name="Johnson D."/>
            <person name="Minx P."/>
            <person name="Bentley D."/>
            <person name="Fulton B."/>
            <person name="Miller N."/>
            <person name="Greco T."/>
            <person name="Kemp K."/>
            <person name="Kramer J."/>
            <person name="Fulton L."/>
            <person name="Mardis E."/>
            <person name="Dante M."/>
            <person name="Pepin K."/>
            <person name="Hillier L.W."/>
            <person name="Nelson J."/>
            <person name="Spieth J."/>
            <person name="Ryan E."/>
            <person name="Andrews S."/>
            <person name="Geisel C."/>
            <person name="Layman D."/>
            <person name="Du H."/>
            <person name="Ali J."/>
            <person name="Berghoff A."/>
            <person name="Jones K."/>
            <person name="Drone K."/>
            <person name="Cotton M."/>
            <person name="Joshu C."/>
            <person name="Antonoiu B."/>
            <person name="Zidanic M."/>
            <person name="Strong C."/>
            <person name="Sun H."/>
            <person name="Lamar B."/>
            <person name="Yordan C."/>
            <person name="Ma P."/>
            <person name="Zhong J."/>
            <person name="Preston R."/>
            <person name="Vil D."/>
            <person name="Shekher M."/>
            <person name="Matero A."/>
            <person name="Shah R."/>
            <person name="Swaby I.K."/>
            <person name="O'Shaughnessy A."/>
            <person name="Rodriguez M."/>
            <person name="Hoffman J."/>
            <person name="Till S."/>
            <person name="Granat S."/>
            <person name="Shohdy N."/>
            <person name="Hasegawa A."/>
            <person name="Hameed A."/>
            <person name="Lodhi M."/>
            <person name="Johnson A."/>
            <person name="Chen E."/>
            <person name="Marra M.A."/>
            <person name="Martienssen R."/>
            <person name="McCombie W.R."/>
        </authorList>
    </citation>
    <scope>NUCLEOTIDE SEQUENCE [LARGE SCALE GENOMIC DNA]</scope>
    <source>
        <strain>cv. Columbia</strain>
    </source>
</reference>
<reference key="2">
    <citation type="journal article" date="2017" name="Plant J.">
        <title>Araport11: a complete reannotation of the Arabidopsis thaliana reference genome.</title>
        <authorList>
            <person name="Cheng C.Y."/>
            <person name="Krishnakumar V."/>
            <person name="Chan A.P."/>
            <person name="Thibaud-Nissen F."/>
            <person name="Schobel S."/>
            <person name="Town C.D."/>
        </authorList>
    </citation>
    <scope>GENOME REANNOTATION</scope>
    <source>
        <strain>cv. Columbia</strain>
    </source>
</reference>
<reference key="3">
    <citation type="journal article" date="2003" name="Science">
        <title>Empirical analysis of transcriptional activity in the Arabidopsis genome.</title>
        <authorList>
            <person name="Yamada K."/>
            <person name="Lim J."/>
            <person name="Dale J.M."/>
            <person name="Chen H."/>
            <person name="Shinn P."/>
            <person name="Palm C.J."/>
            <person name="Southwick A.M."/>
            <person name="Wu H.C."/>
            <person name="Kim C.J."/>
            <person name="Nguyen M."/>
            <person name="Pham P.K."/>
            <person name="Cheuk R.F."/>
            <person name="Karlin-Newmann G."/>
            <person name="Liu S.X."/>
            <person name="Lam B."/>
            <person name="Sakano H."/>
            <person name="Wu T."/>
            <person name="Yu G."/>
            <person name="Miranda M."/>
            <person name="Quach H.L."/>
            <person name="Tripp M."/>
            <person name="Chang C.H."/>
            <person name="Lee J.M."/>
            <person name="Toriumi M.J."/>
            <person name="Chan M.M."/>
            <person name="Tang C.C."/>
            <person name="Onodera C.S."/>
            <person name="Deng J.M."/>
            <person name="Akiyama K."/>
            <person name="Ansari Y."/>
            <person name="Arakawa T."/>
            <person name="Banh J."/>
            <person name="Banno F."/>
            <person name="Bowser L."/>
            <person name="Brooks S.Y."/>
            <person name="Carninci P."/>
            <person name="Chao Q."/>
            <person name="Choy N."/>
            <person name="Enju A."/>
            <person name="Goldsmith A.D."/>
            <person name="Gurjal M."/>
            <person name="Hansen N.F."/>
            <person name="Hayashizaki Y."/>
            <person name="Johnson-Hopson C."/>
            <person name="Hsuan V.W."/>
            <person name="Iida K."/>
            <person name="Karnes M."/>
            <person name="Khan S."/>
            <person name="Koesema E."/>
            <person name="Ishida J."/>
            <person name="Jiang P.X."/>
            <person name="Jones T."/>
            <person name="Kawai J."/>
            <person name="Kamiya A."/>
            <person name="Meyers C."/>
            <person name="Nakajima M."/>
            <person name="Narusaka M."/>
            <person name="Seki M."/>
            <person name="Sakurai T."/>
            <person name="Satou M."/>
            <person name="Tamse R."/>
            <person name="Vaysberg M."/>
            <person name="Wallender E.K."/>
            <person name="Wong C."/>
            <person name="Yamamura Y."/>
            <person name="Yuan S."/>
            <person name="Shinozaki K."/>
            <person name="Davis R.W."/>
            <person name="Theologis A."/>
            <person name="Ecker J.R."/>
        </authorList>
    </citation>
    <scope>NUCLEOTIDE SEQUENCE [LARGE SCALE MRNA] (ISOFORM 1)</scope>
    <source>
        <strain>cv. Columbia</strain>
    </source>
</reference>
<reference key="4">
    <citation type="submission" date="2002-03" db="EMBL/GenBank/DDBJ databases">
        <title>Full-length cDNA from Arabidopsis thaliana.</title>
        <authorList>
            <person name="Brover V.V."/>
            <person name="Troukhan M.E."/>
            <person name="Alexandrov N.A."/>
            <person name="Lu Y.-P."/>
            <person name="Flavell R.B."/>
            <person name="Feldmann K.A."/>
        </authorList>
    </citation>
    <scope>NUCLEOTIDE SEQUENCE [LARGE SCALE MRNA] (ISOFORM 2)</scope>
</reference>
<feature type="signal peptide" evidence="3">
    <location>
        <begin position="1"/>
        <end position="24"/>
    </location>
</feature>
<feature type="chain" id="PRO_0000251271" description="Glucan endo-1,3-beta-glucosidase 12">
    <location>
        <begin position="25"/>
        <end position="507"/>
    </location>
</feature>
<feature type="propeptide" id="PRO_0000251272" description="Removed in mature form" evidence="3">
    <location>
        <begin position="508"/>
        <end position="534"/>
    </location>
</feature>
<feature type="region of interest" description="Disordered" evidence="4">
    <location>
        <begin position="348"/>
        <end position="379"/>
    </location>
</feature>
<feature type="compositionally biased region" description="Low complexity" evidence="4">
    <location>
        <begin position="349"/>
        <end position="377"/>
    </location>
</feature>
<feature type="active site" description="Proton donor" evidence="2">
    <location>
        <position position="120"/>
    </location>
</feature>
<feature type="active site" description="Nucleophile" evidence="2">
    <location>
        <position position="264"/>
    </location>
</feature>
<feature type="lipid moiety-binding region" description="GPI-anchor amidated serine" evidence="3">
    <location>
        <position position="507"/>
    </location>
</feature>
<feature type="glycosylation site" description="N-linked (GlcNAc...) asparagine" evidence="3">
    <location>
        <position position="127"/>
    </location>
</feature>
<feature type="glycosylation site" description="N-linked (GlcNAc...) asparagine" evidence="3">
    <location>
        <position position="336"/>
    </location>
</feature>
<feature type="glycosylation site" description="N-linked (GlcNAc...) asparagine" evidence="3">
    <location>
        <position position="357"/>
    </location>
</feature>
<feature type="glycosylation site" description="N-linked (GlcNAc...) asparagine" evidence="3">
    <location>
        <position position="375"/>
    </location>
</feature>
<feature type="glycosylation site" description="N-linked (GlcNAc...) asparagine" evidence="3">
    <location>
        <position position="485"/>
    </location>
</feature>
<feature type="glycosylation site" description="N-linked (GlcNAc...) asparagine" evidence="3">
    <location>
        <position position="491"/>
    </location>
</feature>
<feature type="glycosylation site" description="N-linked (GlcNAc...) asparagine" evidence="3">
    <location>
        <position position="495"/>
    </location>
</feature>
<feature type="disulfide bond" evidence="1">
    <location>
        <begin position="392"/>
        <end position="455"/>
    </location>
</feature>
<feature type="splice variant" id="VSP_020753" description="In isoform 2." evidence="5">
    <original>YGNCLYMIAPATDGFNRTMAGNITG</original>
    <variation>KYLYTYTFQNTSIKSNVKP</variation>
    <location>
        <begin position="470"/>
        <end position="494"/>
    </location>
</feature>
<comment type="catalytic activity">
    <reaction>
        <text>Hydrolysis of (1-&gt;3)-beta-D-glucosidic linkages in (1-&gt;3)-beta-D-glucans.</text>
        <dbReference type="EC" id="3.2.1.39"/>
    </reaction>
</comment>
<comment type="subcellular location">
    <subcellularLocation>
        <location evidence="6">Secreted</location>
        <location evidence="6">Cell wall</location>
    </subcellularLocation>
    <subcellularLocation>
        <location>Cell membrane</location>
        <topology>Lipid-anchor</topology>
        <topology>GPI-anchor</topology>
        <orientation>Extracellular side</orientation>
    </subcellularLocation>
</comment>
<comment type="alternative products">
    <event type="alternative splicing"/>
    <isoform>
        <id>Q8VYE5-1</id>
        <name>1</name>
        <sequence type="displayed"/>
    </isoform>
    <isoform>
        <id>Q8VYE5-2</id>
        <name>2</name>
        <sequence type="described" ref="VSP_020753"/>
    </isoform>
</comment>
<comment type="PTM">
    <text evidence="1">Contains two additional disulfide bonds.</text>
</comment>
<comment type="miscellaneous">
    <molecule>Isoform 2</molecule>
    <text evidence="6">May be due to an intron retention.</text>
</comment>
<comment type="similarity">
    <text evidence="6">Belongs to the glycosyl hydrolase 17 family.</text>
</comment>
<comment type="sequence caution" evidence="6">
    <conflict type="erroneous gene model prediction">
        <sequence resource="EMBL-CDS" id="CAB79694"/>
    </conflict>
</comment>
<dbReference type="EC" id="3.2.1.39"/>
<dbReference type="EMBL" id="AL161574">
    <property type="protein sequence ID" value="CAB79694.1"/>
    <property type="status" value="ALT_SEQ"/>
    <property type="molecule type" value="Genomic_DNA"/>
</dbReference>
<dbReference type="EMBL" id="CP002687">
    <property type="protein sequence ID" value="AEE85622.1"/>
    <property type="molecule type" value="Genomic_DNA"/>
</dbReference>
<dbReference type="EMBL" id="AY072133">
    <property type="protein sequence ID" value="AAL59955.1"/>
    <property type="molecule type" value="mRNA"/>
</dbReference>
<dbReference type="EMBL" id="AY096465">
    <property type="protein sequence ID" value="AAM20105.1"/>
    <property type="molecule type" value="mRNA"/>
</dbReference>
<dbReference type="EMBL" id="AY088354">
    <property type="protein sequence ID" value="AAM65893.1"/>
    <property type="molecule type" value="mRNA"/>
</dbReference>
<dbReference type="PIR" id="F85342">
    <property type="entry name" value="F85342"/>
</dbReference>
<dbReference type="RefSeq" id="NP_849556.1">
    <molecule id="Q8VYE5-1"/>
    <property type="nucleotide sequence ID" value="NM_179225.4"/>
</dbReference>
<dbReference type="SMR" id="Q8VYE5"/>
<dbReference type="FunCoup" id="Q8VYE5">
    <property type="interactions" value="83"/>
</dbReference>
<dbReference type="STRING" id="3702.Q8VYE5"/>
<dbReference type="CAZy" id="CBM43">
    <property type="family name" value="Carbohydrate-Binding Module Family 43"/>
</dbReference>
<dbReference type="CAZy" id="GH17">
    <property type="family name" value="Glycoside Hydrolase Family 17"/>
</dbReference>
<dbReference type="GlyGen" id="Q8VYE5">
    <property type="glycosylation" value="8 sites"/>
</dbReference>
<dbReference type="iPTMnet" id="Q8VYE5"/>
<dbReference type="PaxDb" id="3702-AT4G29360.1"/>
<dbReference type="ProteomicsDB" id="221952">
    <molecule id="Q8VYE5-1"/>
</dbReference>
<dbReference type="EnsemblPlants" id="AT4G29360.1">
    <molecule id="Q8VYE5-1"/>
    <property type="protein sequence ID" value="AT4G29360.1"/>
    <property type="gene ID" value="AT4G29360"/>
</dbReference>
<dbReference type="GeneID" id="829057"/>
<dbReference type="Gramene" id="AT4G29360.1">
    <molecule id="Q8VYE5-1"/>
    <property type="protein sequence ID" value="AT4G29360.1"/>
    <property type="gene ID" value="AT4G29360"/>
</dbReference>
<dbReference type="KEGG" id="ath:AT4G29360"/>
<dbReference type="Araport" id="AT4G29360"/>
<dbReference type="TAIR" id="AT4G29360"/>
<dbReference type="eggNOG" id="ENOG502QQHU">
    <property type="taxonomic scope" value="Eukaryota"/>
</dbReference>
<dbReference type="InParanoid" id="Q8VYE5"/>
<dbReference type="OMA" id="MNFKSVK"/>
<dbReference type="PhylomeDB" id="Q8VYE5"/>
<dbReference type="PRO" id="PR:Q8VYE5"/>
<dbReference type="Proteomes" id="UP000006548">
    <property type="component" value="Chromosome 4"/>
</dbReference>
<dbReference type="ExpressionAtlas" id="Q8VYE5">
    <property type="expression patterns" value="baseline and differential"/>
</dbReference>
<dbReference type="GO" id="GO:0005576">
    <property type="term" value="C:extracellular region"/>
    <property type="evidence" value="ECO:0007669"/>
    <property type="project" value="UniProtKB-KW"/>
</dbReference>
<dbReference type="GO" id="GO:0005886">
    <property type="term" value="C:plasma membrane"/>
    <property type="evidence" value="ECO:0007669"/>
    <property type="project" value="UniProtKB-SubCell"/>
</dbReference>
<dbReference type="GO" id="GO:0098552">
    <property type="term" value="C:side of membrane"/>
    <property type="evidence" value="ECO:0007669"/>
    <property type="project" value="UniProtKB-KW"/>
</dbReference>
<dbReference type="GO" id="GO:0042973">
    <property type="term" value="F:glucan endo-1,3-beta-D-glucosidase activity"/>
    <property type="evidence" value="ECO:0007669"/>
    <property type="project" value="UniProtKB-EC"/>
</dbReference>
<dbReference type="GO" id="GO:0005975">
    <property type="term" value="P:carbohydrate metabolic process"/>
    <property type="evidence" value="ECO:0007669"/>
    <property type="project" value="InterPro"/>
</dbReference>
<dbReference type="GO" id="GO:0071555">
    <property type="term" value="P:cell wall organization"/>
    <property type="evidence" value="ECO:0007669"/>
    <property type="project" value="UniProtKB-KW"/>
</dbReference>
<dbReference type="GO" id="GO:0006952">
    <property type="term" value="P:defense response"/>
    <property type="evidence" value="ECO:0007669"/>
    <property type="project" value="UniProtKB-KW"/>
</dbReference>
<dbReference type="FunFam" id="3.20.20.80:FF:000002">
    <property type="entry name" value="Glucan endo-1,3-beta-glucosidase 3"/>
    <property type="match status" value="1"/>
</dbReference>
<dbReference type="FunFam" id="1.20.58.1040:FF:000001">
    <property type="entry name" value="Glucan endo-1,3-beta-glucosidase 4"/>
    <property type="match status" value="1"/>
</dbReference>
<dbReference type="Gene3D" id="1.20.58.1040">
    <property type="match status" value="1"/>
</dbReference>
<dbReference type="Gene3D" id="3.20.20.80">
    <property type="entry name" value="Glycosidases"/>
    <property type="match status" value="1"/>
</dbReference>
<dbReference type="InterPro" id="IPR000490">
    <property type="entry name" value="Glyco_hydro_17"/>
</dbReference>
<dbReference type="InterPro" id="IPR044965">
    <property type="entry name" value="Glyco_hydro_17_plant"/>
</dbReference>
<dbReference type="InterPro" id="IPR017853">
    <property type="entry name" value="Glycoside_hydrolase_SF"/>
</dbReference>
<dbReference type="InterPro" id="IPR012946">
    <property type="entry name" value="X8"/>
</dbReference>
<dbReference type="PANTHER" id="PTHR32227">
    <property type="entry name" value="GLUCAN ENDO-1,3-BETA-GLUCOSIDASE BG1-RELATED-RELATED"/>
    <property type="match status" value="1"/>
</dbReference>
<dbReference type="Pfam" id="PF00332">
    <property type="entry name" value="Glyco_hydro_17"/>
    <property type="match status" value="1"/>
</dbReference>
<dbReference type="Pfam" id="PF07983">
    <property type="entry name" value="X8"/>
    <property type="match status" value="1"/>
</dbReference>
<dbReference type="SMART" id="SM00768">
    <property type="entry name" value="X8"/>
    <property type="match status" value="1"/>
</dbReference>
<dbReference type="SUPFAM" id="SSF51445">
    <property type="entry name" value="(Trans)glycosidases"/>
    <property type="match status" value="1"/>
</dbReference>
<dbReference type="PROSITE" id="PS00587">
    <property type="entry name" value="GLYCOSYL_HYDROL_F17"/>
    <property type="match status" value="1"/>
</dbReference>
<gene>
    <name type="ordered locus">At4g29360</name>
    <name type="ORF">F17A13.180</name>
</gene>
<proteinExistence type="evidence at transcript level"/>
<organism>
    <name type="scientific">Arabidopsis thaliana</name>
    <name type="common">Mouse-ear cress</name>
    <dbReference type="NCBI Taxonomy" id="3702"/>
    <lineage>
        <taxon>Eukaryota</taxon>
        <taxon>Viridiplantae</taxon>
        <taxon>Streptophyta</taxon>
        <taxon>Embryophyta</taxon>
        <taxon>Tracheophyta</taxon>
        <taxon>Spermatophyta</taxon>
        <taxon>Magnoliopsida</taxon>
        <taxon>eudicotyledons</taxon>
        <taxon>Gunneridae</taxon>
        <taxon>Pentapetalae</taxon>
        <taxon>rosids</taxon>
        <taxon>malvids</taxon>
        <taxon>Brassicales</taxon>
        <taxon>Brassicaceae</taxon>
        <taxon>Camelineae</taxon>
        <taxon>Arabidopsis</taxon>
    </lineage>
</organism>
<accession>Q8VYE5</accession>
<accession>Q8L9M3</accession>
<accession>Q9M0E7</accession>
<protein>
    <recommendedName>
        <fullName>Glucan endo-1,3-beta-glucosidase 12</fullName>
        <ecNumber>3.2.1.39</ecNumber>
    </recommendedName>
    <alternativeName>
        <fullName>(1-&gt;3)-beta-glucan endohydrolase 12</fullName>
        <shortName>(1-&gt;3)-beta-glucanase 12</shortName>
    </alternativeName>
    <alternativeName>
        <fullName>Beta-1,3-endoglucanase 12</fullName>
        <shortName>Beta-1,3-glucanase 12</shortName>
    </alternativeName>
</protein>
<sequence>MGQRLNLVFWIFVSILAFLNFGMASKIGICYGRNADNLPSPNRVSELIQHLNIKFVRIYDANIDVLKAFANTGIELMIGVPNADLLAFAQFQSNVDTWLSNNILPYYPSTKITSISVGLEVTEAPDNATGLVLPAMRNIHTALKKSGLDKKIKISSSHSLAILSRSFPPSSASFSKKHSAFLKPMLEFLVENESPFMIDLYPYYAYRDSTEKVPLEYALFESSSQVVDPATGLLYSNMFDAQLDAIYFALTAMSFKTVKVMVTESGWPSKGSPKETAATPENALAYNTNLIRHVIGDPGTPAKPGEEIDVYLFSLFNENRKPGIESERNWGMFYANGTNVYALDFTGENTTPVSPTNSTTGTSPSPSSSPIINGNSTVTIGGGGGGGTKKWCIASSQASVTELQTALDWACGPGNVDCSAVQPDQPCFEPDTVLSHASYAFNTYYQQSGASSIDCSFNGASVEVDKDPSYGNCLYMIAPATDGFNRTMAGNITGNITAIDSPLASPSSTNEAFRQMVVAVSVLLPCFVVCSSIW</sequence>
<keyword id="KW-0025">Alternative splicing</keyword>
<keyword id="KW-1003">Cell membrane</keyword>
<keyword id="KW-0134">Cell wall</keyword>
<keyword id="KW-0961">Cell wall biogenesis/degradation</keyword>
<keyword id="KW-1015">Disulfide bond</keyword>
<keyword id="KW-0325">Glycoprotein</keyword>
<keyword id="KW-0326">Glycosidase</keyword>
<keyword id="KW-0336">GPI-anchor</keyword>
<keyword id="KW-0378">Hydrolase</keyword>
<keyword id="KW-0449">Lipoprotein</keyword>
<keyword id="KW-0472">Membrane</keyword>
<keyword id="KW-0611">Plant defense</keyword>
<keyword id="KW-1185">Reference proteome</keyword>
<keyword id="KW-0964">Secreted</keyword>
<keyword id="KW-0732">Signal</keyword>
<name>E1312_ARATH</name>
<evidence type="ECO:0000250" key="1"/>
<evidence type="ECO:0000250" key="2">
    <source>
        <dbReference type="UniProtKB" id="O22317"/>
    </source>
</evidence>
<evidence type="ECO:0000255" key="3"/>
<evidence type="ECO:0000256" key="4">
    <source>
        <dbReference type="SAM" id="MobiDB-lite"/>
    </source>
</evidence>
<evidence type="ECO:0000303" key="5">
    <source ref="4"/>
</evidence>
<evidence type="ECO:0000305" key="6"/>